<proteinExistence type="inferred from homology"/>
<name>URE3_RHIME</name>
<keyword id="KW-0963">Cytoplasm</keyword>
<keyword id="KW-0378">Hydrolase</keyword>
<keyword id="KW-1185">Reference proteome</keyword>
<organism>
    <name type="scientific">Rhizobium meliloti (strain 1021)</name>
    <name type="common">Ensifer meliloti</name>
    <name type="synonym">Sinorhizobium meliloti</name>
    <dbReference type="NCBI Taxonomy" id="266834"/>
    <lineage>
        <taxon>Bacteria</taxon>
        <taxon>Pseudomonadati</taxon>
        <taxon>Pseudomonadota</taxon>
        <taxon>Alphaproteobacteria</taxon>
        <taxon>Hyphomicrobiales</taxon>
        <taxon>Rhizobiaceae</taxon>
        <taxon>Sinorhizobium/Ensifer group</taxon>
        <taxon>Sinorhizobium</taxon>
    </lineage>
</organism>
<sequence length="100" mass="11128">MNLTPREKDKLLISMAAMVARRRLERGVKLNHPEAIALITDFVVEGARDGRSVAELMEAGAHVLTRDQVMEGIAEMIHDIQVEATFPDGTKLVTVHEPIR</sequence>
<evidence type="ECO:0000255" key="1">
    <source>
        <dbReference type="HAMAP-Rule" id="MF_00739"/>
    </source>
</evidence>
<reference key="1">
    <citation type="journal article" date="1994" name="Mol. Gen. Genet.">
        <title>A 4.6 kb DNA region of Rhizobium meliloti involved in determining urease and hydrogenase activities carries the structural genes for urease (ureA, ureB, ureC) interrupted by other open reading frames.</title>
        <authorList>
            <person name="Miksch G."/>
            <person name="Arnold W."/>
            <person name="Lentzsch P."/>
            <person name="Priefer U.B."/>
            <person name="Puehler A."/>
        </authorList>
    </citation>
    <scope>NUCLEOTIDE SEQUENCE [GENOMIC DNA]</scope>
    <source>
        <strain>AK631</strain>
    </source>
</reference>
<reference key="2">
    <citation type="journal article" date="2001" name="Proc. Natl. Acad. Sci. U.S.A.">
        <title>Analysis of the chromosome sequence of the legume symbiont Sinorhizobium meliloti strain 1021.</title>
        <authorList>
            <person name="Capela D."/>
            <person name="Barloy-Hubler F."/>
            <person name="Gouzy J."/>
            <person name="Bothe G."/>
            <person name="Ampe F."/>
            <person name="Batut J."/>
            <person name="Boistard P."/>
            <person name="Becker A."/>
            <person name="Boutry M."/>
            <person name="Cadieu E."/>
            <person name="Dreano S."/>
            <person name="Gloux S."/>
            <person name="Godrie T."/>
            <person name="Goffeau A."/>
            <person name="Kahn D."/>
            <person name="Kiss E."/>
            <person name="Lelaure V."/>
            <person name="Masuy D."/>
            <person name="Pohl T."/>
            <person name="Portetelle D."/>
            <person name="Puehler A."/>
            <person name="Purnelle B."/>
            <person name="Ramsperger U."/>
            <person name="Renard C."/>
            <person name="Thebault P."/>
            <person name="Vandenbol M."/>
            <person name="Weidner S."/>
            <person name="Galibert F."/>
        </authorList>
    </citation>
    <scope>NUCLEOTIDE SEQUENCE [LARGE SCALE GENOMIC DNA]</scope>
    <source>
        <strain>1021</strain>
    </source>
</reference>
<reference key="3">
    <citation type="journal article" date="2001" name="Science">
        <title>The composite genome of the legume symbiont Sinorhizobium meliloti.</title>
        <authorList>
            <person name="Galibert F."/>
            <person name="Finan T.M."/>
            <person name="Long S.R."/>
            <person name="Puehler A."/>
            <person name="Abola P."/>
            <person name="Ampe F."/>
            <person name="Barloy-Hubler F."/>
            <person name="Barnett M.J."/>
            <person name="Becker A."/>
            <person name="Boistard P."/>
            <person name="Bothe G."/>
            <person name="Boutry M."/>
            <person name="Bowser L."/>
            <person name="Buhrmester J."/>
            <person name="Cadieu E."/>
            <person name="Capela D."/>
            <person name="Chain P."/>
            <person name="Cowie A."/>
            <person name="Davis R.W."/>
            <person name="Dreano S."/>
            <person name="Federspiel N.A."/>
            <person name="Fisher R.F."/>
            <person name="Gloux S."/>
            <person name="Godrie T."/>
            <person name="Goffeau A."/>
            <person name="Golding B."/>
            <person name="Gouzy J."/>
            <person name="Gurjal M."/>
            <person name="Hernandez-Lucas I."/>
            <person name="Hong A."/>
            <person name="Huizar L."/>
            <person name="Hyman R.W."/>
            <person name="Jones T."/>
            <person name="Kahn D."/>
            <person name="Kahn M.L."/>
            <person name="Kalman S."/>
            <person name="Keating D.H."/>
            <person name="Kiss E."/>
            <person name="Komp C."/>
            <person name="Lelaure V."/>
            <person name="Masuy D."/>
            <person name="Palm C."/>
            <person name="Peck M.C."/>
            <person name="Pohl T.M."/>
            <person name="Portetelle D."/>
            <person name="Purnelle B."/>
            <person name="Ramsperger U."/>
            <person name="Surzycki R."/>
            <person name="Thebault P."/>
            <person name="Vandenbol M."/>
            <person name="Vorhoelter F.J."/>
            <person name="Weidner S."/>
            <person name="Wells D.H."/>
            <person name="Wong K."/>
            <person name="Yeh K.-C."/>
            <person name="Batut J."/>
        </authorList>
    </citation>
    <scope>NUCLEOTIDE SEQUENCE [LARGE SCALE GENOMIC DNA]</scope>
    <source>
        <strain>1021</strain>
    </source>
</reference>
<dbReference type="EC" id="3.5.1.5" evidence="1"/>
<dbReference type="EMBL" id="S69145">
    <property type="protein sequence ID" value="AAB30134.1"/>
    <property type="molecule type" value="Genomic_DNA"/>
</dbReference>
<dbReference type="EMBL" id="AL591688">
    <property type="protein sequence ID" value="CAC47054.1"/>
    <property type="molecule type" value="Genomic_DNA"/>
</dbReference>
<dbReference type="PIR" id="S42602">
    <property type="entry name" value="S42602"/>
</dbReference>
<dbReference type="RefSeq" id="NP_386581.1">
    <property type="nucleotide sequence ID" value="NC_003047.1"/>
</dbReference>
<dbReference type="RefSeq" id="WP_003525618.1">
    <property type="nucleotide sequence ID" value="NC_003047.1"/>
</dbReference>
<dbReference type="SMR" id="P42887"/>
<dbReference type="EnsemblBacteria" id="CAC47054">
    <property type="protein sequence ID" value="CAC47054"/>
    <property type="gene ID" value="SMc01941"/>
</dbReference>
<dbReference type="KEGG" id="sme:SMc01941"/>
<dbReference type="PATRIC" id="fig|266834.11.peg.3964"/>
<dbReference type="eggNOG" id="COG0831">
    <property type="taxonomic scope" value="Bacteria"/>
</dbReference>
<dbReference type="HOGENOM" id="CLU_145825_1_0_5"/>
<dbReference type="OrthoDB" id="9797217at2"/>
<dbReference type="BioCyc" id="MetaCyc:MONOMER-11556"/>
<dbReference type="UniPathway" id="UPA00258">
    <property type="reaction ID" value="UER00370"/>
</dbReference>
<dbReference type="Proteomes" id="UP000001976">
    <property type="component" value="Chromosome"/>
</dbReference>
<dbReference type="GO" id="GO:0005737">
    <property type="term" value="C:cytoplasm"/>
    <property type="evidence" value="ECO:0007669"/>
    <property type="project" value="UniProtKB-SubCell"/>
</dbReference>
<dbReference type="GO" id="GO:0016151">
    <property type="term" value="F:nickel cation binding"/>
    <property type="evidence" value="ECO:0007669"/>
    <property type="project" value="InterPro"/>
</dbReference>
<dbReference type="GO" id="GO:0009039">
    <property type="term" value="F:urease activity"/>
    <property type="evidence" value="ECO:0007669"/>
    <property type="project" value="UniProtKB-UniRule"/>
</dbReference>
<dbReference type="GO" id="GO:0043419">
    <property type="term" value="P:urea catabolic process"/>
    <property type="evidence" value="ECO:0007669"/>
    <property type="project" value="UniProtKB-UniRule"/>
</dbReference>
<dbReference type="CDD" id="cd00390">
    <property type="entry name" value="Urease_gamma"/>
    <property type="match status" value="1"/>
</dbReference>
<dbReference type="Gene3D" id="3.30.280.10">
    <property type="entry name" value="Urease, gamma-like subunit"/>
    <property type="match status" value="1"/>
</dbReference>
<dbReference type="HAMAP" id="MF_00739">
    <property type="entry name" value="Urease_gamma"/>
    <property type="match status" value="1"/>
</dbReference>
<dbReference type="InterPro" id="IPR012010">
    <property type="entry name" value="Urease_gamma"/>
</dbReference>
<dbReference type="InterPro" id="IPR002026">
    <property type="entry name" value="Urease_gamma/gamma-beta_su"/>
</dbReference>
<dbReference type="InterPro" id="IPR036463">
    <property type="entry name" value="Urease_gamma_sf"/>
</dbReference>
<dbReference type="InterPro" id="IPR050069">
    <property type="entry name" value="Urease_subunit"/>
</dbReference>
<dbReference type="NCBIfam" id="NF009712">
    <property type="entry name" value="PRK13241.1"/>
    <property type="match status" value="1"/>
</dbReference>
<dbReference type="NCBIfam" id="TIGR00193">
    <property type="entry name" value="urease_gam"/>
    <property type="match status" value="1"/>
</dbReference>
<dbReference type="PANTHER" id="PTHR33569">
    <property type="entry name" value="UREASE"/>
    <property type="match status" value="1"/>
</dbReference>
<dbReference type="PANTHER" id="PTHR33569:SF1">
    <property type="entry name" value="UREASE"/>
    <property type="match status" value="1"/>
</dbReference>
<dbReference type="Pfam" id="PF00547">
    <property type="entry name" value="Urease_gamma"/>
    <property type="match status" value="1"/>
</dbReference>
<dbReference type="PIRSF" id="PIRSF001223">
    <property type="entry name" value="Urease_gamma"/>
    <property type="match status" value="1"/>
</dbReference>
<dbReference type="SUPFAM" id="SSF54111">
    <property type="entry name" value="Urease, gamma-subunit"/>
    <property type="match status" value="1"/>
</dbReference>
<protein>
    <recommendedName>
        <fullName evidence="1">Urease subunit gamma</fullName>
        <ecNumber evidence="1">3.5.1.5</ecNumber>
    </recommendedName>
    <alternativeName>
        <fullName evidence="1">Urea amidohydrolase subunit gamma</fullName>
    </alternativeName>
</protein>
<feature type="chain" id="PRO_0000098034" description="Urease subunit gamma">
    <location>
        <begin position="1"/>
        <end position="100"/>
    </location>
</feature>
<accession>P42887</accession>
<comment type="catalytic activity">
    <reaction evidence="1">
        <text>urea + 2 H2O + H(+) = hydrogencarbonate + 2 NH4(+)</text>
        <dbReference type="Rhea" id="RHEA:20557"/>
        <dbReference type="ChEBI" id="CHEBI:15377"/>
        <dbReference type="ChEBI" id="CHEBI:15378"/>
        <dbReference type="ChEBI" id="CHEBI:16199"/>
        <dbReference type="ChEBI" id="CHEBI:17544"/>
        <dbReference type="ChEBI" id="CHEBI:28938"/>
        <dbReference type="EC" id="3.5.1.5"/>
    </reaction>
</comment>
<comment type="pathway">
    <text evidence="1">Nitrogen metabolism; urea degradation; CO(2) and NH(3) from urea (urease route): step 1/1.</text>
</comment>
<comment type="subunit">
    <text evidence="1">Heterotrimer of UreA (gamma), UreB (beta) and UreC (alpha) subunits. Three heterotrimers associate to form the active enzyme.</text>
</comment>
<comment type="subcellular location">
    <subcellularLocation>
        <location evidence="1">Cytoplasm</location>
    </subcellularLocation>
</comment>
<comment type="similarity">
    <text evidence="1">Belongs to the urease gamma subunit family.</text>
</comment>
<gene>
    <name evidence="1" type="primary">ureA</name>
    <name type="ordered locus">R02475</name>
    <name type="ORF">SMc01941</name>
</gene>